<keyword id="KW-0479">Metal-binding</keyword>
<keyword id="KW-0687">Ribonucleoprotein</keyword>
<keyword id="KW-0689">Ribosomal protein</keyword>
<keyword id="KW-0694">RNA-binding</keyword>
<keyword id="KW-0699">rRNA-binding</keyword>
<keyword id="KW-0862">Zinc</keyword>
<proteinExistence type="inferred from homology"/>
<feature type="chain" id="PRO_1000067941" description="Small ribosomal subunit protein uS14">
    <location>
        <begin position="1"/>
        <end position="61"/>
    </location>
</feature>
<feature type="binding site" evidence="1">
    <location>
        <position position="24"/>
    </location>
    <ligand>
        <name>Zn(2+)</name>
        <dbReference type="ChEBI" id="CHEBI:29105"/>
    </ligand>
</feature>
<feature type="binding site" evidence="1">
    <location>
        <position position="27"/>
    </location>
    <ligand>
        <name>Zn(2+)</name>
        <dbReference type="ChEBI" id="CHEBI:29105"/>
    </ligand>
</feature>
<feature type="binding site" evidence="1">
    <location>
        <position position="40"/>
    </location>
    <ligand>
        <name>Zn(2+)</name>
        <dbReference type="ChEBI" id="CHEBI:29105"/>
    </ligand>
</feature>
<feature type="binding site" evidence="1">
    <location>
        <position position="43"/>
    </location>
    <ligand>
        <name>Zn(2+)</name>
        <dbReference type="ChEBI" id="CHEBI:29105"/>
    </ligand>
</feature>
<accession>A4IJK1</accession>
<organism>
    <name type="scientific">Geobacillus thermodenitrificans (strain NG80-2)</name>
    <dbReference type="NCBI Taxonomy" id="420246"/>
    <lineage>
        <taxon>Bacteria</taxon>
        <taxon>Bacillati</taxon>
        <taxon>Bacillota</taxon>
        <taxon>Bacilli</taxon>
        <taxon>Bacillales</taxon>
        <taxon>Anoxybacillaceae</taxon>
        <taxon>Geobacillus</taxon>
    </lineage>
</organism>
<reference key="1">
    <citation type="journal article" date="2007" name="Proc. Natl. Acad. Sci. U.S.A.">
        <title>Genome and proteome of long-chain alkane degrading Geobacillus thermodenitrificans NG80-2 isolated from a deep-subsurface oil reservoir.</title>
        <authorList>
            <person name="Feng L."/>
            <person name="Wang W."/>
            <person name="Cheng J."/>
            <person name="Ren Y."/>
            <person name="Zhao G."/>
            <person name="Gao C."/>
            <person name="Tang Y."/>
            <person name="Liu X."/>
            <person name="Han W."/>
            <person name="Peng X."/>
            <person name="Liu R."/>
            <person name="Wang L."/>
        </authorList>
    </citation>
    <scope>NUCLEOTIDE SEQUENCE [LARGE SCALE GENOMIC DNA]</scope>
    <source>
        <strain>NG80-2</strain>
    </source>
</reference>
<name>RS14Z_GEOTN</name>
<dbReference type="EMBL" id="CP000557">
    <property type="protein sequence ID" value="ABO65505.1"/>
    <property type="molecule type" value="Genomic_DNA"/>
</dbReference>
<dbReference type="RefSeq" id="WP_003247599.1">
    <property type="nucleotide sequence ID" value="NC_009328.1"/>
</dbReference>
<dbReference type="SMR" id="A4IJK1"/>
<dbReference type="KEGG" id="gtn:GTNG_0118"/>
<dbReference type="eggNOG" id="COG0199">
    <property type="taxonomic scope" value="Bacteria"/>
</dbReference>
<dbReference type="HOGENOM" id="CLU_139869_3_0_9"/>
<dbReference type="Proteomes" id="UP000001578">
    <property type="component" value="Chromosome"/>
</dbReference>
<dbReference type="GO" id="GO:0015935">
    <property type="term" value="C:small ribosomal subunit"/>
    <property type="evidence" value="ECO:0007669"/>
    <property type="project" value="TreeGrafter"/>
</dbReference>
<dbReference type="GO" id="GO:0019843">
    <property type="term" value="F:rRNA binding"/>
    <property type="evidence" value="ECO:0007669"/>
    <property type="project" value="UniProtKB-UniRule"/>
</dbReference>
<dbReference type="GO" id="GO:0003735">
    <property type="term" value="F:structural constituent of ribosome"/>
    <property type="evidence" value="ECO:0007669"/>
    <property type="project" value="InterPro"/>
</dbReference>
<dbReference type="GO" id="GO:0008270">
    <property type="term" value="F:zinc ion binding"/>
    <property type="evidence" value="ECO:0007669"/>
    <property type="project" value="UniProtKB-UniRule"/>
</dbReference>
<dbReference type="GO" id="GO:0006412">
    <property type="term" value="P:translation"/>
    <property type="evidence" value="ECO:0007669"/>
    <property type="project" value="UniProtKB-UniRule"/>
</dbReference>
<dbReference type="FunFam" id="4.10.830.10:FF:000001">
    <property type="entry name" value="30S ribosomal protein S14 type Z"/>
    <property type="match status" value="1"/>
</dbReference>
<dbReference type="Gene3D" id="4.10.830.10">
    <property type="entry name" value="30s Ribosomal Protein S14, Chain N"/>
    <property type="match status" value="1"/>
</dbReference>
<dbReference type="HAMAP" id="MF_01364_B">
    <property type="entry name" value="Ribosomal_uS14_2_B"/>
    <property type="match status" value="1"/>
</dbReference>
<dbReference type="InterPro" id="IPR001209">
    <property type="entry name" value="Ribosomal_uS14"/>
</dbReference>
<dbReference type="InterPro" id="IPR023053">
    <property type="entry name" value="Ribosomal_uS14_bact"/>
</dbReference>
<dbReference type="InterPro" id="IPR018271">
    <property type="entry name" value="Ribosomal_uS14_CS"/>
</dbReference>
<dbReference type="InterPro" id="IPR043140">
    <property type="entry name" value="Ribosomal_uS14_sf"/>
</dbReference>
<dbReference type="NCBIfam" id="NF005974">
    <property type="entry name" value="PRK08061.1"/>
    <property type="match status" value="1"/>
</dbReference>
<dbReference type="PANTHER" id="PTHR19836">
    <property type="entry name" value="30S RIBOSOMAL PROTEIN S14"/>
    <property type="match status" value="1"/>
</dbReference>
<dbReference type="PANTHER" id="PTHR19836:SF26">
    <property type="entry name" value="SMALL RIBOSOMAL SUBUNIT PROTEIN US14B"/>
    <property type="match status" value="1"/>
</dbReference>
<dbReference type="Pfam" id="PF00253">
    <property type="entry name" value="Ribosomal_S14"/>
    <property type="match status" value="1"/>
</dbReference>
<dbReference type="SUPFAM" id="SSF57716">
    <property type="entry name" value="Glucocorticoid receptor-like (DNA-binding domain)"/>
    <property type="match status" value="1"/>
</dbReference>
<dbReference type="PROSITE" id="PS00527">
    <property type="entry name" value="RIBOSOMAL_S14"/>
    <property type="match status" value="1"/>
</dbReference>
<comment type="function">
    <text evidence="1">Binds 16S rRNA, required for the assembly of 30S particles and may also be responsible for determining the conformation of the 16S rRNA at the A site.</text>
</comment>
<comment type="cofactor">
    <cofactor evidence="1">
        <name>Zn(2+)</name>
        <dbReference type="ChEBI" id="CHEBI:29105"/>
    </cofactor>
    <text evidence="1">Binds 1 zinc ion per subunit.</text>
</comment>
<comment type="subunit">
    <text evidence="1">Part of the 30S ribosomal subunit. Contacts proteins S3 and S10.</text>
</comment>
<comment type="similarity">
    <text evidence="1">Belongs to the universal ribosomal protein uS14 family. Zinc-binding uS14 subfamily.</text>
</comment>
<gene>
    <name evidence="1" type="primary">rpsZ</name>
    <name evidence="1" type="synonym">rpsN</name>
    <name type="ordered locus">GTNG_0118</name>
</gene>
<evidence type="ECO:0000255" key="1">
    <source>
        <dbReference type="HAMAP-Rule" id="MF_01364"/>
    </source>
</evidence>
<evidence type="ECO:0000305" key="2"/>
<protein>
    <recommendedName>
        <fullName evidence="1">Small ribosomal subunit protein uS14</fullName>
    </recommendedName>
    <alternativeName>
        <fullName evidence="2">30S ribosomal protein S14 type Z</fullName>
    </alternativeName>
</protein>
<sequence length="61" mass="7280">MAKKSMIAKQKRTPKFKVRAYTRCERCGRPHSVYRKFKLCRICFRELAYKGQLPGIKKASW</sequence>